<feature type="chain" id="PRO_0000171811" description="Putative membrane protein insertion efficiency factor">
    <location>
        <begin position="1"/>
        <end position="83"/>
    </location>
</feature>
<feature type="region of interest" description="Disordered" evidence="2">
    <location>
        <begin position="62"/>
        <end position="83"/>
    </location>
</feature>
<sequence length="83" mass="9487">MNIVPILLIRFYQSFISPLLGPSCKYHPTCSNYAIEAFRQHNFFYASWLTVWRVLRCNPFSKGGYDPVPPKSVKSAGNSKDSK</sequence>
<organism>
    <name type="scientific">Chlorobaculum tepidum (strain ATCC 49652 / DSM 12025 / NBRC 103806 / TLS)</name>
    <name type="common">Chlorobium tepidum</name>
    <dbReference type="NCBI Taxonomy" id="194439"/>
    <lineage>
        <taxon>Bacteria</taxon>
        <taxon>Pseudomonadati</taxon>
        <taxon>Chlorobiota</taxon>
        <taxon>Chlorobiia</taxon>
        <taxon>Chlorobiales</taxon>
        <taxon>Chlorobiaceae</taxon>
        <taxon>Chlorobaculum</taxon>
    </lineage>
</organism>
<keyword id="KW-0997">Cell inner membrane</keyword>
<keyword id="KW-1003">Cell membrane</keyword>
<keyword id="KW-0472">Membrane</keyword>
<keyword id="KW-1185">Reference proteome</keyword>
<dbReference type="EMBL" id="AE006470">
    <property type="protein sequence ID" value="AAM71253.1"/>
    <property type="molecule type" value="Genomic_DNA"/>
</dbReference>
<dbReference type="RefSeq" id="NP_660911.1">
    <property type="nucleotide sequence ID" value="NC_002932.3"/>
</dbReference>
<dbReference type="RefSeq" id="WP_010931699.1">
    <property type="nucleotide sequence ID" value="NC_002932.3"/>
</dbReference>
<dbReference type="STRING" id="194439.CT0005"/>
<dbReference type="EnsemblBacteria" id="AAM71253">
    <property type="protein sequence ID" value="AAM71253"/>
    <property type="gene ID" value="CT0005"/>
</dbReference>
<dbReference type="KEGG" id="cte:CT0005"/>
<dbReference type="PATRIC" id="fig|194439.7.peg.5"/>
<dbReference type="eggNOG" id="COG0759">
    <property type="taxonomic scope" value="Bacteria"/>
</dbReference>
<dbReference type="HOGENOM" id="CLU_144811_5_2_10"/>
<dbReference type="OrthoDB" id="9801753at2"/>
<dbReference type="Proteomes" id="UP000001007">
    <property type="component" value="Chromosome"/>
</dbReference>
<dbReference type="GO" id="GO:0005886">
    <property type="term" value="C:plasma membrane"/>
    <property type="evidence" value="ECO:0007669"/>
    <property type="project" value="UniProtKB-SubCell"/>
</dbReference>
<dbReference type="HAMAP" id="MF_00386">
    <property type="entry name" value="UPF0161_YidD"/>
    <property type="match status" value="1"/>
</dbReference>
<dbReference type="InterPro" id="IPR002696">
    <property type="entry name" value="Membr_insert_effic_factor_YidD"/>
</dbReference>
<dbReference type="NCBIfam" id="TIGR00278">
    <property type="entry name" value="membrane protein insertion efficiency factor YidD"/>
    <property type="match status" value="1"/>
</dbReference>
<dbReference type="PANTHER" id="PTHR33383">
    <property type="entry name" value="MEMBRANE PROTEIN INSERTION EFFICIENCY FACTOR-RELATED"/>
    <property type="match status" value="1"/>
</dbReference>
<dbReference type="PANTHER" id="PTHR33383:SF1">
    <property type="entry name" value="MEMBRANE PROTEIN INSERTION EFFICIENCY FACTOR-RELATED"/>
    <property type="match status" value="1"/>
</dbReference>
<dbReference type="Pfam" id="PF01809">
    <property type="entry name" value="YidD"/>
    <property type="match status" value="1"/>
</dbReference>
<dbReference type="SMART" id="SM01234">
    <property type="entry name" value="Haemolytic"/>
    <property type="match status" value="1"/>
</dbReference>
<reference key="1">
    <citation type="journal article" date="2002" name="Proc. Natl. Acad. Sci. U.S.A.">
        <title>The complete genome sequence of Chlorobium tepidum TLS, a photosynthetic, anaerobic, green-sulfur bacterium.</title>
        <authorList>
            <person name="Eisen J.A."/>
            <person name="Nelson K.E."/>
            <person name="Paulsen I.T."/>
            <person name="Heidelberg J.F."/>
            <person name="Wu M."/>
            <person name="Dodson R.J."/>
            <person name="DeBoy R.T."/>
            <person name="Gwinn M.L."/>
            <person name="Nelson W.C."/>
            <person name="Haft D.H."/>
            <person name="Hickey E.K."/>
            <person name="Peterson J.D."/>
            <person name="Durkin A.S."/>
            <person name="Kolonay J.F."/>
            <person name="Yang F."/>
            <person name="Holt I.E."/>
            <person name="Umayam L.A."/>
            <person name="Mason T.M."/>
            <person name="Brenner M."/>
            <person name="Shea T.P."/>
            <person name="Parksey D.S."/>
            <person name="Nierman W.C."/>
            <person name="Feldblyum T.V."/>
            <person name="Hansen C.L."/>
            <person name="Craven M.B."/>
            <person name="Radune D."/>
            <person name="Vamathevan J.J."/>
            <person name="Khouri H.M."/>
            <person name="White O."/>
            <person name="Gruber T.M."/>
            <person name="Ketchum K.A."/>
            <person name="Venter J.C."/>
            <person name="Tettelin H."/>
            <person name="Bryant D.A."/>
            <person name="Fraser C.M."/>
        </authorList>
    </citation>
    <scope>NUCLEOTIDE SEQUENCE [LARGE SCALE GENOMIC DNA]</scope>
    <source>
        <strain>ATCC 49652 / DSM 12025 / NBRC 103806 / TLS</strain>
    </source>
</reference>
<proteinExistence type="inferred from homology"/>
<name>YIDD_CHLTE</name>
<evidence type="ECO:0000255" key="1">
    <source>
        <dbReference type="HAMAP-Rule" id="MF_00386"/>
    </source>
</evidence>
<evidence type="ECO:0000256" key="2">
    <source>
        <dbReference type="SAM" id="MobiDB-lite"/>
    </source>
</evidence>
<gene>
    <name type="ordered locus">CT0005</name>
</gene>
<accession>Q8KGG3</accession>
<comment type="function">
    <text evidence="1">Could be involved in insertion of integral membrane proteins into the membrane.</text>
</comment>
<comment type="subcellular location">
    <subcellularLocation>
        <location evidence="1">Cell inner membrane</location>
        <topology evidence="1">Peripheral membrane protein</topology>
        <orientation evidence="1">Cytoplasmic side</orientation>
    </subcellularLocation>
</comment>
<comment type="similarity">
    <text evidence="1">Belongs to the UPF0161 family.</text>
</comment>
<protein>
    <recommendedName>
        <fullName evidence="1">Putative membrane protein insertion efficiency factor</fullName>
    </recommendedName>
</protein>